<dbReference type="EC" id="3.4.21.92" evidence="1"/>
<dbReference type="EMBL" id="CR522870">
    <property type="protein sequence ID" value="CAG37267.1"/>
    <property type="status" value="ALT_INIT"/>
    <property type="molecule type" value="Genomic_DNA"/>
</dbReference>
<dbReference type="RefSeq" id="WP_041278005.1">
    <property type="nucleotide sequence ID" value="NC_006138.1"/>
</dbReference>
<dbReference type="SMR" id="Q6AK59"/>
<dbReference type="STRING" id="177439.DP2538"/>
<dbReference type="MEROPS" id="S14.001"/>
<dbReference type="KEGG" id="dps:DP2538"/>
<dbReference type="eggNOG" id="COG0740">
    <property type="taxonomic scope" value="Bacteria"/>
</dbReference>
<dbReference type="HOGENOM" id="CLU_058707_3_2_7"/>
<dbReference type="OrthoDB" id="9802800at2"/>
<dbReference type="Proteomes" id="UP000000602">
    <property type="component" value="Chromosome"/>
</dbReference>
<dbReference type="GO" id="GO:0005737">
    <property type="term" value="C:cytoplasm"/>
    <property type="evidence" value="ECO:0007669"/>
    <property type="project" value="UniProtKB-SubCell"/>
</dbReference>
<dbReference type="GO" id="GO:0009368">
    <property type="term" value="C:endopeptidase Clp complex"/>
    <property type="evidence" value="ECO:0007669"/>
    <property type="project" value="TreeGrafter"/>
</dbReference>
<dbReference type="GO" id="GO:0004176">
    <property type="term" value="F:ATP-dependent peptidase activity"/>
    <property type="evidence" value="ECO:0007669"/>
    <property type="project" value="InterPro"/>
</dbReference>
<dbReference type="GO" id="GO:0051117">
    <property type="term" value="F:ATPase binding"/>
    <property type="evidence" value="ECO:0007669"/>
    <property type="project" value="TreeGrafter"/>
</dbReference>
<dbReference type="GO" id="GO:0004252">
    <property type="term" value="F:serine-type endopeptidase activity"/>
    <property type="evidence" value="ECO:0007669"/>
    <property type="project" value="UniProtKB-UniRule"/>
</dbReference>
<dbReference type="GO" id="GO:0006515">
    <property type="term" value="P:protein quality control for misfolded or incompletely synthesized proteins"/>
    <property type="evidence" value="ECO:0007669"/>
    <property type="project" value="TreeGrafter"/>
</dbReference>
<dbReference type="CDD" id="cd07017">
    <property type="entry name" value="S14_ClpP_2"/>
    <property type="match status" value="1"/>
</dbReference>
<dbReference type="FunFam" id="3.90.226.10:FF:000001">
    <property type="entry name" value="ATP-dependent Clp protease proteolytic subunit"/>
    <property type="match status" value="1"/>
</dbReference>
<dbReference type="Gene3D" id="3.90.226.10">
    <property type="entry name" value="2-enoyl-CoA Hydratase, Chain A, domain 1"/>
    <property type="match status" value="1"/>
</dbReference>
<dbReference type="HAMAP" id="MF_00444">
    <property type="entry name" value="ClpP"/>
    <property type="match status" value="1"/>
</dbReference>
<dbReference type="InterPro" id="IPR001907">
    <property type="entry name" value="ClpP"/>
</dbReference>
<dbReference type="InterPro" id="IPR029045">
    <property type="entry name" value="ClpP/crotonase-like_dom_sf"/>
</dbReference>
<dbReference type="InterPro" id="IPR023562">
    <property type="entry name" value="ClpP/TepA"/>
</dbReference>
<dbReference type="InterPro" id="IPR033135">
    <property type="entry name" value="ClpP_His_AS"/>
</dbReference>
<dbReference type="InterPro" id="IPR018215">
    <property type="entry name" value="ClpP_Ser_AS"/>
</dbReference>
<dbReference type="NCBIfam" id="TIGR00493">
    <property type="entry name" value="clpP"/>
    <property type="match status" value="1"/>
</dbReference>
<dbReference type="NCBIfam" id="NF001368">
    <property type="entry name" value="PRK00277.1"/>
    <property type="match status" value="1"/>
</dbReference>
<dbReference type="NCBIfam" id="NF009205">
    <property type="entry name" value="PRK12553.1"/>
    <property type="match status" value="1"/>
</dbReference>
<dbReference type="PANTHER" id="PTHR10381">
    <property type="entry name" value="ATP-DEPENDENT CLP PROTEASE PROTEOLYTIC SUBUNIT"/>
    <property type="match status" value="1"/>
</dbReference>
<dbReference type="PANTHER" id="PTHR10381:SF70">
    <property type="entry name" value="ATP-DEPENDENT CLP PROTEASE PROTEOLYTIC SUBUNIT"/>
    <property type="match status" value="1"/>
</dbReference>
<dbReference type="Pfam" id="PF00574">
    <property type="entry name" value="CLP_protease"/>
    <property type="match status" value="1"/>
</dbReference>
<dbReference type="PRINTS" id="PR00127">
    <property type="entry name" value="CLPPROTEASEP"/>
</dbReference>
<dbReference type="SUPFAM" id="SSF52096">
    <property type="entry name" value="ClpP/crotonase"/>
    <property type="match status" value="1"/>
</dbReference>
<dbReference type="PROSITE" id="PS00382">
    <property type="entry name" value="CLP_PROTEASE_HIS"/>
    <property type="match status" value="1"/>
</dbReference>
<dbReference type="PROSITE" id="PS00381">
    <property type="entry name" value="CLP_PROTEASE_SER"/>
    <property type="match status" value="1"/>
</dbReference>
<evidence type="ECO:0000255" key="1">
    <source>
        <dbReference type="HAMAP-Rule" id="MF_00444"/>
    </source>
</evidence>
<evidence type="ECO:0000305" key="2"/>
<gene>
    <name evidence="1" type="primary">clpP</name>
    <name type="ordered locus">DP2538</name>
</gene>
<proteinExistence type="inferred from homology"/>
<keyword id="KW-0963">Cytoplasm</keyword>
<keyword id="KW-0378">Hydrolase</keyword>
<keyword id="KW-0645">Protease</keyword>
<keyword id="KW-1185">Reference proteome</keyword>
<keyword id="KW-0720">Serine protease</keyword>
<sequence length="203" mass="22335">MNLIPMVVEQTPRGERSYDIYSRLLKERIIFLGSGVNDDVANVIVAQLLFLEAEDPEKDITFYINSPGGSVTAGMAIYDTMQYIKCDIATLCMGQAASMGAVLLAAGTAGKRYALPNSRIMIHQPLGGFQGQATDIEIHTKEILRIRKDLNNILAHHTGKTLKKIESDTERDNFMSSVEAQKYGLIDEVLVKREDVEGAADNG</sequence>
<protein>
    <recommendedName>
        <fullName evidence="1">ATP-dependent Clp protease proteolytic subunit</fullName>
        <ecNumber evidence="1">3.4.21.92</ecNumber>
    </recommendedName>
    <alternativeName>
        <fullName evidence="1">Endopeptidase Clp</fullName>
    </alternativeName>
</protein>
<feature type="chain" id="PRO_0000179549" description="ATP-dependent Clp protease proteolytic subunit">
    <location>
        <begin position="1"/>
        <end position="203"/>
    </location>
</feature>
<feature type="active site" description="Nucleophile" evidence="1">
    <location>
        <position position="98"/>
    </location>
</feature>
<feature type="active site" evidence="1">
    <location>
        <position position="123"/>
    </location>
</feature>
<comment type="function">
    <text evidence="1">Cleaves peptides in various proteins in a process that requires ATP hydrolysis. Has a chymotrypsin-like activity. Plays a major role in the degradation of misfolded proteins.</text>
</comment>
<comment type="catalytic activity">
    <reaction evidence="1">
        <text>Hydrolysis of proteins to small peptides in the presence of ATP and magnesium. alpha-casein is the usual test substrate. In the absence of ATP, only oligopeptides shorter than five residues are hydrolyzed (such as succinyl-Leu-Tyr-|-NHMec, and Leu-Tyr-Leu-|-Tyr-Trp, in which cleavage of the -Tyr-|-Leu- and -Tyr-|-Trp bonds also occurs).</text>
        <dbReference type="EC" id="3.4.21.92"/>
    </reaction>
</comment>
<comment type="subunit">
    <text evidence="1">Fourteen ClpP subunits assemble into 2 heptameric rings which stack back to back to give a disk-like structure with a central cavity, resembling the structure of eukaryotic proteasomes.</text>
</comment>
<comment type="subcellular location">
    <subcellularLocation>
        <location evidence="1">Cytoplasm</location>
    </subcellularLocation>
</comment>
<comment type="similarity">
    <text evidence="1">Belongs to the peptidase S14 family.</text>
</comment>
<comment type="sequence caution" evidence="2">
    <conflict type="erroneous initiation">
        <sequence resource="EMBL-CDS" id="CAG37267"/>
    </conflict>
</comment>
<organism>
    <name type="scientific">Desulfotalea psychrophila (strain LSv54 / DSM 12343)</name>
    <dbReference type="NCBI Taxonomy" id="177439"/>
    <lineage>
        <taxon>Bacteria</taxon>
        <taxon>Pseudomonadati</taxon>
        <taxon>Thermodesulfobacteriota</taxon>
        <taxon>Desulfobulbia</taxon>
        <taxon>Desulfobulbales</taxon>
        <taxon>Desulfocapsaceae</taxon>
        <taxon>Desulfotalea</taxon>
    </lineage>
</organism>
<name>CLPP_DESPS</name>
<reference key="1">
    <citation type="journal article" date="2004" name="Environ. Microbiol.">
        <title>The genome of Desulfotalea psychrophila, a sulfate-reducing bacterium from permanently cold Arctic sediments.</title>
        <authorList>
            <person name="Rabus R."/>
            <person name="Ruepp A."/>
            <person name="Frickey T."/>
            <person name="Rattei T."/>
            <person name="Fartmann B."/>
            <person name="Stark M."/>
            <person name="Bauer M."/>
            <person name="Zibat A."/>
            <person name="Lombardot T."/>
            <person name="Becker I."/>
            <person name="Amann J."/>
            <person name="Gellner K."/>
            <person name="Teeling H."/>
            <person name="Leuschner W.D."/>
            <person name="Gloeckner F.-O."/>
            <person name="Lupas A.N."/>
            <person name="Amann R."/>
            <person name="Klenk H.-P."/>
        </authorList>
    </citation>
    <scope>NUCLEOTIDE SEQUENCE [LARGE SCALE GENOMIC DNA]</scope>
    <source>
        <strain>DSM 12343 / LSv54</strain>
    </source>
</reference>
<accession>Q6AK59</accession>